<protein>
    <recommendedName>
        <fullName evidence="1">ATP phosphoribosyltransferase</fullName>
        <shortName evidence="1">ATP-PRT</shortName>
        <shortName evidence="1">ATP-PRTase</shortName>
        <ecNumber evidence="1">2.4.2.17</ecNumber>
    </recommendedName>
</protein>
<dbReference type="EC" id="2.4.2.17" evidence="1"/>
<dbReference type="EMBL" id="CP000553">
    <property type="protein sequence ID" value="ABM75177.1"/>
    <property type="molecule type" value="Genomic_DNA"/>
</dbReference>
<dbReference type="RefSeq" id="WP_011294521.1">
    <property type="nucleotide sequence ID" value="NC_008819.1"/>
</dbReference>
<dbReference type="SMR" id="A2C117"/>
<dbReference type="KEGG" id="pme:NATL1_06151"/>
<dbReference type="eggNOG" id="COG0040">
    <property type="taxonomic scope" value="Bacteria"/>
</dbReference>
<dbReference type="HOGENOM" id="CLU_038115_2_0_3"/>
<dbReference type="UniPathway" id="UPA00031">
    <property type="reaction ID" value="UER00006"/>
</dbReference>
<dbReference type="Proteomes" id="UP000002592">
    <property type="component" value="Chromosome"/>
</dbReference>
<dbReference type="GO" id="GO:0005737">
    <property type="term" value="C:cytoplasm"/>
    <property type="evidence" value="ECO:0007669"/>
    <property type="project" value="UniProtKB-SubCell"/>
</dbReference>
<dbReference type="GO" id="GO:0005524">
    <property type="term" value="F:ATP binding"/>
    <property type="evidence" value="ECO:0007669"/>
    <property type="project" value="UniProtKB-KW"/>
</dbReference>
<dbReference type="GO" id="GO:0003879">
    <property type="term" value="F:ATP phosphoribosyltransferase activity"/>
    <property type="evidence" value="ECO:0007669"/>
    <property type="project" value="UniProtKB-UniRule"/>
</dbReference>
<dbReference type="GO" id="GO:0000105">
    <property type="term" value="P:L-histidine biosynthetic process"/>
    <property type="evidence" value="ECO:0007669"/>
    <property type="project" value="UniProtKB-UniRule"/>
</dbReference>
<dbReference type="CDD" id="cd13595">
    <property type="entry name" value="PBP2_HisGs"/>
    <property type="match status" value="1"/>
</dbReference>
<dbReference type="FunFam" id="3.40.190.10:FF:000008">
    <property type="entry name" value="ATP phosphoribosyltransferase"/>
    <property type="match status" value="1"/>
</dbReference>
<dbReference type="Gene3D" id="3.40.190.10">
    <property type="entry name" value="Periplasmic binding protein-like II"/>
    <property type="match status" value="2"/>
</dbReference>
<dbReference type="HAMAP" id="MF_01018">
    <property type="entry name" value="HisG_Short"/>
    <property type="match status" value="1"/>
</dbReference>
<dbReference type="InterPro" id="IPR013820">
    <property type="entry name" value="ATP_PRibTrfase_cat"/>
</dbReference>
<dbReference type="InterPro" id="IPR018198">
    <property type="entry name" value="ATP_PRibTrfase_CS"/>
</dbReference>
<dbReference type="InterPro" id="IPR001348">
    <property type="entry name" value="ATP_PRibTrfase_HisG"/>
</dbReference>
<dbReference type="InterPro" id="IPR024893">
    <property type="entry name" value="ATP_PRibTrfase_HisG_short"/>
</dbReference>
<dbReference type="NCBIfam" id="TIGR00070">
    <property type="entry name" value="hisG"/>
    <property type="match status" value="1"/>
</dbReference>
<dbReference type="PANTHER" id="PTHR21403:SF8">
    <property type="entry name" value="ATP PHOSPHORIBOSYLTRANSFERASE"/>
    <property type="match status" value="1"/>
</dbReference>
<dbReference type="PANTHER" id="PTHR21403">
    <property type="entry name" value="ATP PHOSPHORIBOSYLTRANSFERASE ATP-PRTASE"/>
    <property type="match status" value="1"/>
</dbReference>
<dbReference type="Pfam" id="PF01634">
    <property type="entry name" value="HisG"/>
    <property type="match status" value="1"/>
</dbReference>
<dbReference type="SUPFAM" id="SSF53850">
    <property type="entry name" value="Periplasmic binding protein-like II"/>
    <property type="match status" value="1"/>
</dbReference>
<dbReference type="PROSITE" id="PS01316">
    <property type="entry name" value="ATP_P_PHORIBOSYLTR"/>
    <property type="match status" value="1"/>
</dbReference>
<organism>
    <name type="scientific">Prochlorococcus marinus (strain NATL1A)</name>
    <dbReference type="NCBI Taxonomy" id="167555"/>
    <lineage>
        <taxon>Bacteria</taxon>
        <taxon>Bacillati</taxon>
        <taxon>Cyanobacteriota</taxon>
        <taxon>Cyanophyceae</taxon>
        <taxon>Synechococcales</taxon>
        <taxon>Prochlorococcaceae</taxon>
        <taxon>Prochlorococcus</taxon>
    </lineage>
</organism>
<reference key="1">
    <citation type="journal article" date="2007" name="PLoS Genet.">
        <title>Patterns and implications of gene gain and loss in the evolution of Prochlorococcus.</title>
        <authorList>
            <person name="Kettler G.C."/>
            <person name="Martiny A.C."/>
            <person name="Huang K."/>
            <person name="Zucker J."/>
            <person name="Coleman M.L."/>
            <person name="Rodrigue S."/>
            <person name="Chen F."/>
            <person name="Lapidus A."/>
            <person name="Ferriera S."/>
            <person name="Johnson J."/>
            <person name="Steglich C."/>
            <person name="Church G.M."/>
            <person name="Richardson P."/>
            <person name="Chisholm S.W."/>
        </authorList>
    </citation>
    <scope>NUCLEOTIDE SEQUENCE [LARGE SCALE GENOMIC DNA]</scope>
    <source>
        <strain>NATL1A</strain>
    </source>
</reference>
<keyword id="KW-0028">Amino-acid biosynthesis</keyword>
<keyword id="KW-0067">ATP-binding</keyword>
<keyword id="KW-0963">Cytoplasm</keyword>
<keyword id="KW-0328">Glycosyltransferase</keyword>
<keyword id="KW-0368">Histidine biosynthesis</keyword>
<keyword id="KW-0547">Nucleotide-binding</keyword>
<keyword id="KW-0808">Transferase</keyword>
<evidence type="ECO:0000255" key="1">
    <source>
        <dbReference type="HAMAP-Rule" id="MF_01018"/>
    </source>
</evidence>
<name>HIS1_PROM1</name>
<accession>A2C117</accession>
<proteinExistence type="inferred from homology"/>
<comment type="function">
    <text evidence="1">Catalyzes the condensation of ATP and 5-phosphoribose 1-diphosphate to form N'-(5'-phosphoribosyl)-ATP (PR-ATP). Has a crucial role in the pathway because the rate of histidine biosynthesis seems to be controlled primarily by regulation of HisG enzymatic activity.</text>
</comment>
<comment type="catalytic activity">
    <reaction evidence="1">
        <text>1-(5-phospho-beta-D-ribosyl)-ATP + diphosphate = 5-phospho-alpha-D-ribose 1-diphosphate + ATP</text>
        <dbReference type="Rhea" id="RHEA:18473"/>
        <dbReference type="ChEBI" id="CHEBI:30616"/>
        <dbReference type="ChEBI" id="CHEBI:33019"/>
        <dbReference type="ChEBI" id="CHEBI:58017"/>
        <dbReference type="ChEBI" id="CHEBI:73183"/>
        <dbReference type="EC" id="2.4.2.17"/>
    </reaction>
</comment>
<comment type="pathway">
    <text evidence="1">Amino-acid biosynthesis; L-histidine biosynthesis; L-histidine from 5-phospho-alpha-D-ribose 1-diphosphate: step 1/9.</text>
</comment>
<comment type="subunit">
    <text evidence="1">Heteromultimer composed of HisG and HisZ subunits.</text>
</comment>
<comment type="subcellular location">
    <subcellularLocation>
        <location evidence="1">Cytoplasm</location>
    </subcellularLocation>
</comment>
<comment type="domain">
    <text>Lacks the C-terminal regulatory region which is replaced by HisZ.</text>
</comment>
<comment type="similarity">
    <text evidence="1">Belongs to the ATP phosphoribosyltransferase family. Short subfamily.</text>
</comment>
<sequence>MFTVALAKGALLQESVSMFSDVGLDFSAVLDDSNRQLMVPSACGRAKALLVRNSDVPVYVSYGQAQLGIVGFDVLQEQKLQVSNLVDLGFGECHMSVAVKSSSGYLSASDLPPNCRVASKFTNCAKHFFDQIDLPVQLVHLSGSVELGPITGMAEAIVDLVATGRTLRDNGLVEIEELFKSSARLVGHPLSLRLDKGPLQEIIDSIQIQSQTNLLSDGKK</sequence>
<gene>
    <name evidence="1" type="primary">hisG</name>
    <name type="ordered locus">NATL1_06151</name>
</gene>
<feature type="chain" id="PRO_1000063293" description="ATP phosphoribosyltransferase">
    <location>
        <begin position="1"/>
        <end position="220"/>
    </location>
</feature>